<name>GSH1_ECO27</name>
<feature type="chain" id="PRO_1000146876" description="Glutamate--cysteine ligase">
    <location>
        <begin position="1"/>
        <end position="518"/>
    </location>
</feature>
<dbReference type="EC" id="6.3.2.2" evidence="1"/>
<dbReference type="EMBL" id="FM180568">
    <property type="protein sequence ID" value="CAS10504.1"/>
    <property type="molecule type" value="Genomic_DNA"/>
</dbReference>
<dbReference type="RefSeq" id="WP_000611792.1">
    <property type="nucleotide sequence ID" value="NC_011601.1"/>
</dbReference>
<dbReference type="SMR" id="B7UHB1"/>
<dbReference type="KEGG" id="ecg:E2348C_2956"/>
<dbReference type="HOGENOM" id="CLU_020728_3_0_6"/>
<dbReference type="UniPathway" id="UPA00142">
    <property type="reaction ID" value="UER00209"/>
</dbReference>
<dbReference type="Proteomes" id="UP000008205">
    <property type="component" value="Chromosome"/>
</dbReference>
<dbReference type="GO" id="GO:0005829">
    <property type="term" value="C:cytosol"/>
    <property type="evidence" value="ECO:0007669"/>
    <property type="project" value="TreeGrafter"/>
</dbReference>
<dbReference type="GO" id="GO:0005524">
    <property type="term" value="F:ATP binding"/>
    <property type="evidence" value="ECO:0007669"/>
    <property type="project" value="UniProtKB-KW"/>
</dbReference>
<dbReference type="GO" id="GO:0004357">
    <property type="term" value="F:glutamate-cysteine ligase activity"/>
    <property type="evidence" value="ECO:0007669"/>
    <property type="project" value="UniProtKB-UniRule"/>
</dbReference>
<dbReference type="GO" id="GO:0046872">
    <property type="term" value="F:metal ion binding"/>
    <property type="evidence" value="ECO:0007669"/>
    <property type="project" value="TreeGrafter"/>
</dbReference>
<dbReference type="GO" id="GO:0006750">
    <property type="term" value="P:glutathione biosynthetic process"/>
    <property type="evidence" value="ECO:0007669"/>
    <property type="project" value="UniProtKB-UniRule"/>
</dbReference>
<dbReference type="FunFam" id="3.30.590.20:FF:000001">
    <property type="entry name" value="Glutamate--cysteine ligase"/>
    <property type="match status" value="1"/>
</dbReference>
<dbReference type="Gene3D" id="3.30.590.20">
    <property type="match status" value="1"/>
</dbReference>
<dbReference type="HAMAP" id="MF_00578">
    <property type="entry name" value="Glu_cys_ligase"/>
    <property type="match status" value="1"/>
</dbReference>
<dbReference type="InterPro" id="IPR014746">
    <property type="entry name" value="Gln_synth/guanido_kin_cat_dom"/>
</dbReference>
<dbReference type="InterPro" id="IPR007370">
    <property type="entry name" value="Glu_cys_ligase"/>
</dbReference>
<dbReference type="InterPro" id="IPR006334">
    <property type="entry name" value="Glut_cys_ligase"/>
</dbReference>
<dbReference type="NCBIfam" id="TIGR01434">
    <property type="entry name" value="glu_cys_ligase"/>
    <property type="match status" value="1"/>
</dbReference>
<dbReference type="PANTHER" id="PTHR38761">
    <property type="entry name" value="GLUTAMATE--CYSTEINE LIGASE"/>
    <property type="match status" value="1"/>
</dbReference>
<dbReference type="PANTHER" id="PTHR38761:SF1">
    <property type="entry name" value="GLUTAMATE--CYSTEINE LIGASE"/>
    <property type="match status" value="1"/>
</dbReference>
<dbReference type="Pfam" id="PF04262">
    <property type="entry name" value="Glu_cys_ligase"/>
    <property type="match status" value="1"/>
</dbReference>
<dbReference type="SUPFAM" id="SSF55931">
    <property type="entry name" value="Glutamine synthetase/guanido kinase"/>
    <property type="match status" value="1"/>
</dbReference>
<protein>
    <recommendedName>
        <fullName evidence="1">Glutamate--cysteine ligase</fullName>
        <ecNumber evidence="1">6.3.2.2</ecNumber>
    </recommendedName>
    <alternativeName>
        <fullName evidence="1">Gamma-ECS</fullName>
        <shortName evidence="1">GCS</shortName>
    </alternativeName>
    <alternativeName>
        <fullName evidence="1">Gamma-glutamylcysteine synthetase</fullName>
    </alternativeName>
</protein>
<gene>
    <name evidence="1" type="primary">gshA</name>
    <name type="ordered locus">E2348C_2956</name>
</gene>
<evidence type="ECO:0000255" key="1">
    <source>
        <dbReference type="HAMAP-Rule" id="MF_00578"/>
    </source>
</evidence>
<accession>B7UHB1</accession>
<organism>
    <name type="scientific">Escherichia coli O127:H6 (strain E2348/69 / EPEC)</name>
    <dbReference type="NCBI Taxonomy" id="574521"/>
    <lineage>
        <taxon>Bacteria</taxon>
        <taxon>Pseudomonadati</taxon>
        <taxon>Pseudomonadota</taxon>
        <taxon>Gammaproteobacteria</taxon>
        <taxon>Enterobacterales</taxon>
        <taxon>Enterobacteriaceae</taxon>
        <taxon>Escherichia</taxon>
    </lineage>
</organism>
<comment type="catalytic activity">
    <reaction evidence="1">
        <text>L-cysteine + L-glutamate + ATP = gamma-L-glutamyl-L-cysteine + ADP + phosphate + H(+)</text>
        <dbReference type="Rhea" id="RHEA:13285"/>
        <dbReference type="ChEBI" id="CHEBI:15378"/>
        <dbReference type="ChEBI" id="CHEBI:29985"/>
        <dbReference type="ChEBI" id="CHEBI:30616"/>
        <dbReference type="ChEBI" id="CHEBI:35235"/>
        <dbReference type="ChEBI" id="CHEBI:43474"/>
        <dbReference type="ChEBI" id="CHEBI:58173"/>
        <dbReference type="ChEBI" id="CHEBI:456216"/>
        <dbReference type="EC" id="6.3.2.2"/>
    </reaction>
</comment>
<comment type="pathway">
    <text evidence="1">Sulfur metabolism; glutathione biosynthesis; glutathione from L-cysteine and L-glutamate: step 1/2.</text>
</comment>
<comment type="similarity">
    <text evidence="1">Belongs to the glutamate--cysteine ligase type 1 family. Type 1 subfamily.</text>
</comment>
<sequence>MIPDVSQALAWLEKHPQALKGIQRGLERETLRVNADGTLATTGHPEALGSALTHKWITTDFAEALLEFITPVDGDIEHMLTFMRDLHRYTARNMGDERMWPLSMPCYIAEGQDIELAQYGTSNTGRFKTLYREGLKNRYGALMQTISGVHYNFSLPMAFWQAKCGDISGADAKEKISAGYFRVIRNYYRFGWVIPYLFGASPAICSSFLQGKPTSLPFEKTECGMYYLPYATSLRLSDLGYTNKSQSNLGITFNDLYEYVAGLKQAIKTPSEEYAKIGIEKDGKRLQINSNVLQIENELYAPIRPKRVTRSGESPSDALLRGGIEYIEVRSLDINPFSPIGVDEQQVRFLDLFMVWCALADAPEMSSKELACTRVNWNRVILEGRKPGLTLGIGCETAQFPLPQVGKDLFRDLKRVAQTLDSINGGEAYQKVCDELVACFDNPDLTFSARILRSMIDTGIGGTGKAFAEAYRNLLREEPLEILREEDFVAEREASERRQQEMEAADTEPFAVWLEKHA</sequence>
<proteinExistence type="inferred from homology"/>
<keyword id="KW-0067">ATP-binding</keyword>
<keyword id="KW-0317">Glutathione biosynthesis</keyword>
<keyword id="KW-0436">Ligase</keyword>
<keyword id="KW-0547">Nucleotide-binding</keyword>
<keyword id="KW-1185">Reference proteome</keyword>
<reference key="1">
    <citation type="journal article" date="2009" name="J. Bacteriol.">
        <title>Complete genome sequence and comparative genome analysis of enteropathogenic Escherichia coli O127:H6 strain E2348/69.</title>
        <authorList>
            <person name="Iguchi A."/>
            <person name="Thomson N.R."/>
            <person name="Ogura Y."/>
            <person name="Saunders D."/>
            <person name="Ooka T."/>
            <person name="Henderson I.R."/>
            <person name="Harris D."/>
            <person name="Asadulghani M."/>
            <person name="Kurokawa K."/>
            <person name="Dean P."/>
            <person name="Kenny B."/>
            <person name="Quail M.A."/>
            <person name="Thurston S."/>
            <person name="Dougan G."/>
            <person name="Hayashi T."/>
            <person name="Parkhill J."/>
            <person name="Frankel G."/>
        </authorList>
    </citation>
    <scope>NUCLEOTIDE SEQUENCE [LARGE SCALE GENOMIC DNA]</scope>
    <source>
        <strain>E2348/69 / EPEC</strain>
    </source>
</reference>